<gene>
    <name evidence="1" type="primary">ghrB</name>
    <name type="ordered locus">YPN_3723</name>
    <name type="ORF">YP516_4233</name>
</gene>
<protein>
    <recommendedName>
        <fullName evidence="1">Glyoxylate/hydroxypyruvate reductase B</fullName>
        <ecNumber evidence="1">1.1.1.79</ecNumber>
        <ecNumber evidence="1">1.1.1.81</ecNumber>
    </recommendedName>
</protein>
<keyword id="KW-0963">Cytoplasm</keyword>
<keyword id="KW-0520">NAD</keyword>
<keyword id="KW-0521">NADP</keyword>
<keyword id="KW-0560">Oxidoreductase</keyword>
<evidence type="ECO:0000255" key="1">
    <source>
        <dbReference type="HAMAP-Rule" id="MF_01667"/>
    </source>
</evidence>
<dbReference type="EC" id="1.1.1.79" evidence="1"/>
<dbReference type="EC" id="1.1.1.81" evidence="1"/>
<dbReference type="EMBL" id="CP000305">
    <property type="protein sequence ID" value="ABG20050.1"/>
    <property type="molecule type" value="Genomic_DNA"/>
</dbReference>
<dbReference type="EMBL" id="ACNQ01000019">
    <property type="protein sequence ID" value="EEO74630.1"/>
    <property type="molecule type" value="Genomic_DNA"/>
</dbReference>
<dbReference type="RefSeq" id="WP_002223788.1">
    <property type="nucleotide sequence ID" value="NZ_ACNQ01000019.1"/>
</dbReference>
<dbReference type="SMR" id="Q1CD80"/>
<dbReference type="KEGG" id="ypn:YPN_3723"/>
<dbReference type="HOGENOM" id="CLU_019796_1_2_6"/>
<dbReference type="Proteomes" id="UP000008936">
    <property type="component" value="Chromosome"/>
</dbReference>
<dbReference type="GO" id="GO:0005829">
    <property type="term" value="C:cytosol"/>
    <property type="evidence" value="ECO:0007669"/>
    <property type="project" value="TreeGrafter"/>
</dbReference>
<dbReference type="GO" id="GO:0005886">
    <property type="term" value="C:plasma membrane"/>
    <property type="evidence" value="ECO:0007669"/>
    <property type="project" value="UniProtKB-UniRule"/>
</dbReference>
<dbReference type="GO" id="GO:0030267">
    <property type="term" value="F:glyoxylate reductase (NADPH) activity"/>
    <property type="evidence" value="ECO:0007669"/>
    <property type="project" value="UniProtKB-UniRule"/>
</dbReference>
<dbReference type="GO" id="GO:0008465">
    <property type="term" value="F:hydroxypyruvate reductase (NADH) activity"/>
    <property type="evidence" value="ECO:0007669"/>
    <property type="project" value="RHEA"/>
</dbReference>
<dbReference type="GO" id="GO:0120509">
    <property type="term" value="F:hydroxypyruvate reductase (NADPH) activity"/>
    <property type="evidence" value="ECO:0007669"/>
    <property type="project" value="RHEA"/>
</dbReference>
<dbReference type="GO" id="GO:0051287">
    <property type="term" value="F:NAD binding"/>
    <property type="evidence" value="ECO:0007669"/>
    <property type="project" value="InterPro"/>
</dbReference>
<dbReference type="CDD" id="cd05301">
    <property type="entry name" value="GDH"/>
    <property type="match status" value="1"/>
</dbReference>
<dbReference type="FunFam" id="3.40.50.720:FF:000026">
    <property type="entry name" value="Glyoxylate/hydroxypyruvate reductase B"/>
    <property type="match status" value="1"/>
</dbReference>
<dbReference type="Gene3D" id="3.40.50.720">
    <property type="entry name" value="NAD(P)-binding Rossmann-like Domain"/>
    <property type="match status" value="2"/>
</dbReference>
<dbReference type="HAMAP" id="MF_01667">
    <property type="entry name" value="2_Hacid_dh_C_GhrB"/>
    <property type="match status" value="1"/>
</dbReference>
<dbReference type="InterPro" id="IPR050223">
    <property type="entry name" value="D-isomer_2-hydroxyacid_DH"/>
</dbReference>
<dbReference type="InterPro" id="IPR006139">
    <property type="entry name" value="D-isomer_2_OHA_DH_cat_dom"/>
</dbReference>
<dbReference type="InterPro" id="IPR029753">
    <property type="entry name" value="D-isomer_DH_CS"/>
</dbReference>
<dbReference type="InterPro" id="IPR029752">
    <property type="entry name" value="D-isomer_DH_CS1"/>
</dbReference>
<dbReference type="InterPro" id="IPR006140">
    <property type="entry name" value="D-isomer_DH_NAD-bd"/>
</dbReference>
<dbReference type="InterPro" id="IPR023756">
    <property type="entry name" value="Glyo/OHPyrv_Rdtase_B"/>
</dbReference>
<dbReference type="InterPro" id="IPR036291">
    <property type="entry name" value="NAD(P)-bd_dom_sf"/>
</dbReference>
<dbReference type="NCBIfam" id="NF011938">
    <property type="entry name" value="PRK15409.1"/>
    <property type="match status" value="1"/>
</dbReference>
<dbReference type="PANTHER" id="PTHR10996">
    <property type="entry name" value="2-HYDROXYACID DEHYDROGENASE-RELATED"/>
    <property type="match status" value="1"/>
</dbReference>
<dbReference type="PANTHER" id="PTHR10996:SF283">
    <property type="entry name" value="GLYOXYLATE_HYDROXYPYRUVATE REDUCTASE B"/>
    <property type="match status" value="1"/>
</dbReference>
<dbReference type="Pfam" id="PF00389">
    <property type="entry name" value="2-Hacid_dh"/>
    <property type="match status" value="1"/>
</dbReference>
<dbReference type="Pfam" id="PF02826">
    <property type="entry name" value="2-Hacid_dh_C"/>
    <property type="match status" value="1"/>
</dbReference>
<dbReference type="SUPFAM" id="SSF52283">
    <property type="entry name" value="Formate/glycerate dehydrogenase catalytic domain-like"/>
    <property type="match status" value="1"/>
</dbReference>
<dbReference type="SUPFAM" id="SSF51735">
    <property type="entry name" value="NAD(P)-binding Rossmann-fold domains"/>
    <property type="match status" value="1"/>
</dbReference>
<dbReference type="PROSITE" id="PS00065">
    <property type="entry name" value="D_2_HYDROXYACID_DH_1"/>
    <property type="match status" value="1"/>
</dbReference>
<dbReference type="PROSITE" id="PS00671">
    <property type="entry name" value="D_2_HYDROXYACID_DH_3"/>
    <property type="match status" value="1"/>
</dbReference>
<name>GHRB_YERPN</name>
<reference key="1">
    <citation type="journal article" date="2006" name="J. Bacteriol.">
        <title>Complete genome sequence of Yersinia pestis strains Antiqua and Nepal516: evidence of gene reduction in an emerging pathogen.</title>
        <authorList>
            <person name="Chain P.S.G."/>
            <person name="Hu P."/>
            <person name="Malfatti S.A."/>
            <person name="Radnedge L."/>
            <person name="Larimer F."/>
            <person name="Vergez L.M."/>
            <person name="Worsham P."/>
            <person name="Chu M.C."/>
            <person name="Andersen G.L."/>
        </authorList>
    </citation>
    <scope>NUCLEOTIDE SEQUENCE [LARGE SCALE GENOMIC DNA]</scope>
    <source>
        <strain>Nepal516</strain>
    </source>
</reference>
<reference key="2">
    <citation type="submission" date="2009-04" db="EMBL/GenBank/DDBJ databases">
        <title>Yersinia pestis Nepal516A whole genome shotgun sequencing project.</title>
        <authorList>
            <person name="Plunkett G. III"/>
            <person name="Anderson B.D."/>
            <person name="Baumler D.J."/>
            <person name="Burland V."/>
            <person name="Cabot E.L."/>
            <person name="Glasner J.D."/>
            <person name="Mau B."/>
            <person name="Neeno-Eckwall E."/>
            <person name="Perna N.T."/>
            <person name="Munk A.C."/>
            <person name="Tapia R."/>
            <person name="Green L.D."/>
            <person name="Rogers Y.C."/>
            <person name="Detter J.C."/>
            <person name="Bruce D.C."/>
            <person name="Brettin T.S."/>
        </authorList>
    </citation>
    <scope>NUCLEOTIDE SEQUENCE [LARGE SCALE GENOMIC DNA]</scope>
    <source>
        <strain>Nepal516</strain>
    </source>
</reference>
<sequence>MKPSIVLYKSIPTDLHQRLAQHFTVNSFDGLTPDNQPELLAALQQAEGLIGSGGKIDQDFLQLAPNLRAASTISVGYDNFDVEALSQRGIALMHTPTVLTETVADTMMALMLSTARRVVELAERVKAGEWQESIGDDWFGVDVHHKTIGILGMGRIGMALAQRAHFGFSMPVLYTSRRPHEAAEQRFGARHCSLDTLLAEADFLCITLPMTEQTYHMIGREQLAKMKSSAILINAGRGPVVDEQTLIAALQDGTIHAAGLDVFEQEPLPVDSPLLTLRNVVAVPHIGSATHETRYNMAACAVDNLINALTGTVKENCVNPQVLITH</sequence>
<comment type="function">
    <text evidence="1">Catalyzes the NADPH-dependent reduction of glyoxylate and hydroxypyruvate into glycolate and glycerate, respectively.</text>
</comment>
<comment type="catalytic activity">
    <reaction evidence="1">
        <text>glycolate + NADP(+) = glyoxylate + NADPH + H(+)</text>
        <dbReference type="Rhea" id="RHEA:10992"/>
        <dbReference type="ChEBI" id="CHEBI:15378"/>
        <dbReference type="ChEBI" id="CHEBI:29805"/>
        <dbReference type="ChEBI" id="CHEBI:36655"/>
        <dbReference type="ChEBI" id="CHEBI:57783"/>
        <dbReference type="ChEBI" id="CHEBI:58349"/>
        <dbReference type="EC" id="1.1.1.79"/>
    </reaction>
</comment>
<comment type="catalytic activity">
    <reaction evidence="1">
        <text>(R)-glycerate + NAD(+) = 3-hydroxypyruvate + NADH + H(+)</text>
        <dbReference type="Rhea" id="RHEA:17905"/>
        <dbReference type="ChEBI" id="CHEBI:15378"/>
        <dbReference type="ChEBI" id="CHEBI:16659"/>
        <dbReference type="ChEBI" id="CHEBI:17180"/>
        <dbReference type="ChEBI" id="CHEBI:57540"/>
        <dbReference type="ChEBI" id="CHEBI:57945"/>
        <dbReference type="EC" id="1.1.1.81"/>
    </reaction>
</comment>
<comment type="catalytic activity">
    <reaction evidence="1">
        <text>(R)-glycerate + NADP(+) = 3-hydroxypyruvate + NADPH + H(+)</text>
        <dbReference type="Rhea" id="RHEA:18657"/>
        <dbReference type="ChEBI" id="CHEBI:15378"/>
        <dbReference type="ChEBI" id="CHEBI:16659"/>
        <dbReference type="ChEBI" id="CHEBI:17180"/>
        <dbReference type="ChEBI" id="CHEBI:57783"/>
        <dbReference type="ChEBI" id="CHEBI:58349"/>
        <dbReference type="EC" id="1.1.1.81"/>
    </reaction>
</comment>
<comment type="subunit">
    <text evidence="1">Homodimer.</text>
</comment>
<comment type="subcellular location">
    <subcellularLocation>
        <location evidence="1">Cytoplasm</location>
    </subcellularLocation>
</comment>
<comment type="similarity">
    <text evidence="1">Belongs to the D-isomer specific 2-hydroxyacid dehydrogenase family. GhrB subfamily.</text>
</comment>
<proteinExistence type="inferred from homology"/>
<feature type="chain" id="PRO_0000348410" description="Glyoxylate/hydroxypyruvate reductase B">
    <location>
        <begin position="1"/>
        <end position="326"/>
    </location>
</feature>
<feature type="active site" evidence="1">
    <location>
        <position position="237"/>
    </location>
</feature>
<feature type="active site" evidence="1">
    <location>
        <position position="266"/>
    </location>
</feature>
<feature type="active site" description="Proton donor" evidence="1">
    <location>
        <position position="285"/>
    </location>
</feature>
<organism>
    <name type="scientific">Yersinia pestis bv. Antiqua (strain Nepal516)</name>
    <dbReference type="NCBI Taxonomy" id="377628"/>
    <lineage>
        <taxon>Bacteria</taxon>
        <taxon>Pseudomonadati</taxon>
        <taxon>Pseudomonadota</taxon>
        <taxon>Gammaproteobacteria</taxon>
        <taxon>Enterobacterales</taxon>
        <taxon>Yersiniaceae</taxon>
        <taxon>Yersinia</taxon>
    </lineage>
</organism>
<accession>Q1CD80</accession>
<accession>D1Q277</accession>